<dbReference type="EMBL" id="DQ231562">
    <property type="protein sequence ID" value="ABB90066.1"/>
    <property type="molecule type" value="Genomic_DNA"/>
</dbReference>
<dbReference type="EMBL" id="DQ386163">
    <property type="protein sequence ID" value="ABD47083.1"/>
    <property type="molecule type" value="Genomic_DNA"/>
</dbReference>
<dbReference type="RefSeq" id="YP_635666.1">
    <property type="nucleotide sequence ID" value="NC_008096.2"/>
</dbReference>
<dbReference type="SMR" id="Q2VEF3"/>
<dbReference type="FunCoup" id="Q2VEF3">
    <property type="interactions" value="58"/>
</dbReference>
<dbReference type="STRING" id="4113.Q2VEF3"/>
<dbReference type="GeneID" id="4099871"/>
<dbReference type="KEGG" id="sot:4099871"/>
<dbReference type="InParanoid" id="Q2VEF3"/>
<dbReference type="OrthoDB" id="1558483at2759"/>
<dbReference type="Proteomes" id="UP000011115">
    <property type="component" value="Unassembled WGS sequence"/>
</dbReference>
<dbReference type="GO" id="GO:0009535">
    <property type="term" value="C:chloroplast thylakoid membrane"/>
    <property type="evidence" value="ECO:0007669"/>
    <property type="project" value="UniProtKB-SubCell"/>
</dbReference>
<dbReference type="GO" id="GO:0009539">
    <property type="term" value="C:photosystem II reaction center"/>
    <property type="evidence" value="ECO:0007669"/>
    <property type="project" value="InterPro"/>
</dbReference>
<dbReference type="GO" id="GO:0015979">
    <property type="term" value="P:photosynthesis"/>
    <property type="evidence" value="ECO:0007669"/>
    <property type="project" value="UniProtKB-UniRule"/>
</dbReference>
<dbReference type="HAMAP" id="MF_00808">
    <property type="entry name" value="PSII_PsbT"/>
    <property type="match status" value="1"/>
</dbReference>
<dbReference type="InterPro" id="IPR001743">
    <property type="entry name" value="PSII_PsbT"/>
</dbReference>
<dbReference type="InterPro" id="IPR037268">
    <property type="entry name" value="PSII_PsbT_sf"/>
</dbReference>
<dbReference type="PANTHER" id="PTHR36411">
    <property type="match status" value="1"/>
</dbReference>
<dbReference type="PANTHER" id="PTHR36411:SF2">
    <property type="entry name" value="PHOTOSYSTEM II REACTION CENTER PROTEIN T"/>
    <property type="match status" value="1"/>
</dbReference>
<dbReference type="Pfam" id="PF01405">
    <property type="entry name" value="PsbT"/>
    <property type="match status" value="1"/>
</dbReference>
<dbReference type="SUPFAM" id="SSF161029">
    <property type="entry name" value="Photosystem II reaction center protein T, PsbT"/>
    <property type="match status" value="1"/>
</dbReference>
<proteinExistence type="inferred from homology"/>
<accession>Q2VEF3</accession>
<organism>
    <name type="scientific">Solanum tuberosum</name>
    <name type="common">Potato</name>
    <dbReference type="NCBI Taxonomy" id="4113"/>
    <lineage>
        <taxon>Eukaryota</taxon>
        <taxon>Viridiplantae</taxon>
        <taxon>Streptophyta</taxon>
        <taxon>Embryophyta</taxon>
        <taxon>Tracheophyta</taxon>
        <taxon>Spermatophyta</taxon>
        <taxon>Magnoliopsida</taxon>
        <taxon>eudicotyledons</taxon>
        <taxon>Gunneridae</taxon>
        <taxon>Pentapetalae</taxon>
        <taxon>asterids</taxon>
        <taxon>lamiids</taxon>
        <taxon>Solanales</taxon>
        <taxon>Solanaceae</taxon>
        <taxon>Solanoideae</taxon>
        <taxon>Solaneae</taxon>
        <taxon>Solanum</taxon>
    </lineage>
</organism>
<keyword id="KW-0150">Chloroplast</keyword>
<keyword id="KW-0472">Membrane</keyword>
<keyword id="KW-0602">Photosynthesis</keyword>
<keyword id="KW-0604">Photosystem II</keyword>
<keyword id="KW-0934">Plastid</keyword>
<keyword id="KW-1185">Reference proteome</keyword>
<keyword id="KW-0793">Thylakoid</keyword>
<keyword id="KW-0812">Transmembrane</keyword>
<keyword id="KW-1133">Transmembrane helix</keyword>
<name>PSBT_SOLTU</name>
<sequence length="34" mass="3932">MEALVYTFLLVSTLGIIFFAIFFREPPKVPTKKN</sequence>
<evidence type="ECO:0000255" key="1">
    <source>
        <dbReference type="HAMAP-Rule" id="MF_00808"/>
    </source>
</evidence>
<geneLocation type="chloroplast"/>
<gene>
    <name evidence="1" type="primary">psbT</name>
</gene>
<reference key="1">
    <citation type="journal article" date="2006" name="Plant Cell Rep.">
        <title>The complete chloroplast genome sequences of Solanum tuberosum and comparative analysis with Solanaceae species identified the presence of a 241-bp deletion in cultivated potato chloroplast DNA sequence.</title>
        <authorList>
            <person name="Chung H.-J."/>
            <person name="Jung J.D."/>
            <person name="Park H.-W."/>
            <person name="Kim J.-H."/>
            <person name="Cha H.W."/>
            <person name="Min S.R."/>
            <person name="Jeong W.-J."/>
            <person name="Liu J.R."/>
        </authorList>
    </citation>
    <scope>NUCLEOTIDE SEQUENCE [LARGE SCALE GENOMIC DNA]</scope>
    <source>
        <strain>cv. Desiree</strain>
    </source>
</reference>
<reference key="2">
    <citation type="submission" date="2006-02" db="EMBL/GenBank/DDBJ databases">
        <title>Complete chloroplast genome sequences of Solanum tuberosum cultivar Desiree and comparative analyses with other Solanaceae genomes.</title>
        <authorList>
            <person name="Gargano D."/>
            <person name="Scotti N."/>
            <person name="Vezzi A."/>
            <person name="Bilardi A."/>
            <person name="Valle G."/>
            <person name="Grillo S."/>
            <person name="Cardi T."/>
        </authorList>
    </citation>
    <scope>NUCLEOTIDE SEQUENCE [LARGE SCALE GENOMIC DNA]</scope>
    <source>
        <strain>cv. Desiree</strain>
    </source>
</reference>
<comment type="function">
    <text evidence="1">Found at the monomer-monomer interface of the photosystem II (PS II) dimer, plays a role in assembly and dimerization of PSII. PSII is a light-driven water plastoquinone oxidoreductase, using light energy to abstract electrons from H(2)O, generating a proton gradient subsequently used for ATP formation.</text>
</comment>
<comment type="subunit">
    <text evidence="1">PSII is composed of 1 copy each of membrane proteins PsbA, PsbB, PsbC, PsbD, PsbE, PsbF, PsbH, PsbI, PsbJ, PsbK, PsbL, PsbM, PsbT, PsbY, PsbZ, Psb30/Ycf12, at least 3 peripheral proteins of the oxygen-evolving complex and a large number of cofactors. It forms dimeric complexes.</text>
</comment>
<comment type="subcellular location">
    <subcellularLocation>
        <location evidence="1">Plastid</location>
        <location evidence="1">Chloroplast thylakoid membrane</location>
        <topology evidence="1">Single-pass membrane protein</topology>
    </subcellularLocation>
</comment>
<comment type="similarity">
    <text evidence="1">Belongs to the PsbT family.</text>
</comment>
<feature type="chain" id="PRO_0000276314" description="Photosystem II reaction center protein T">
    <location>
        <begin position="1"/>
        <end position="34"/>
    </location>
</feature>
<feature type="transmembrane region" description="Helical" evidence="1">
    <location>
        <begin position="3"/>
        <end position="23"/>
    </location>
</feature>
<protein>
    <recommendedName>
        <fullName evidence="1">Photosystem II reaction center protein T</fullName>
        <shortName evidence="1">PSII-T</shortName>
    </recommendedName>
</protein>